<sequence length="469" mass="51862">MKRLSGWDAVLLYSETPNVHMHTLKVAVIELDSDRQEFGVDAFREVIAGRLHKLEPLGYQLVDVPLKFHHPMWREHCQVDLNYHIRPWRLRAPGGRRELDEAVGEIASTPLNRDHPLWEMYFVEGLANHRIAVVAKIHHALADGVASANMMARGMDLLPGPEVGRYVPDPAPTKRQLLSAAFIDHLRHLGRIPATIRYTTQGLGRVRRSSRKLSPALTMPFTPPPTFMNHRLTPERRFATATLALIDVKATAKLLGATINDMVLAMSTGALRTLLLRYDGKAEPLLASVPVSYDFSPERISGNRFTGMLVALPADSDDPLQRVRVCHENAVSAKESHQLLGPELISRWAAYWPPAGAEALFRWLSERDGQNKVLNLNISNVPGPRERGRVGAALVTEIYSVGPLTAGSGLNITVWSYVDQLNISVLTDGSTVQDPHEVTAGMIADFIEIRRAAGLSVELTVVESAMAQA</sequence>
<organism>
    <name type="scientific">Mycobacterium tuberculosis (strain ATCC 25618 / H37Rv)</name>
    <dbReference type="NCBI Taxonomy" id="83332"/>
    <lineage>
        <taxon>Bacteria</taxon>
        <taxon>Bacillati</taxon>
        <taxon>Actinomycetota</taxon>
        <taxon>Actinomycetes</taxon>
        <taxon>Mycobacteriales</taxon>
        <taxon>Mycobacteriaceae</taxon>
        <taxon>Mycobacterium</taxon>
        <taxon>Mycobacterium tuberculosis complex</taxon>
    </lineage>
</organism>
<comment type="function">
    <text evidence="1">Catalyzes the terminal and only committed step in triacylglycerol synthesis by using diacylglycerol and fatty acyl CoA as substrates. Required for storage lipid synthesis.</text>
</comment>
<comment type="function">
    <text evidence="3">Upon expression in E.coli functions weakly as a triacylglycerol synthase, making triacylglycerol (TG) from diolein and long-chain fatty acyl-CoA. Has very weak wax synthase activity, incorporating palmityl alcohol into wax esters in the presence of palmitoyl-CoA.</text>
</comment>
<comment type="catalytic activity">
    <reaction evidence="3">
        <text>an acyl-CoA + a 1,2-diacyl-sn-glycerol = a triacyl-sn-glycerol + CoA</text>
        <dbReference type="Rhea" id="RHEA:10868"/>
        <dbReference type="ChEBI" id="CHEBI:17815"/>
        <dbReference type="ChEBI" id="CHEBI:57287"/>
        <dbReference type="ChEBI" id="CHEBI:58342"/>
        <dbReference type="ChEBI" id="CHEBI:64615"/>
        <dbReference type="EC" id="2.3.1.20"/>
    </reaction>
</comment>
<comment type="catalytic activity">
    <reaction evidence="3">
        <text>di-(9Z)-octadecenoylglycerol + (9Z)-octadecenoyl-CoA = 1,2,3-tri-(9Z-octadecenoyl)-glycerol + CoA</text>
        <dbReference type="Rhea" id="RHEA:45780"/>
        <dbReference type="ChEBI" id="CHEBI:53753"/>
        <dbReference type="ChEBI" id="CHEBI:57287"/>
        <dbReference type="ChEBI" id="CHEBI:57387"/>
        <dbReference type="ChEBI" id="CHEBI:75945"/>
    </reaction>
    <physiologicalReaction direction="left-to-right" evidence="3">
        <dbReference type="Rhea" id="RHEA:45781"/>
    </physiologicalReaction>
</comment>
<comment type="pathway">
    <text>Glycerolipid metabolism; triacylglycerol biosynthesis.</text>
</comment>
<comment type="induction">
    <text evidence="3">Induced in response to low levels of nitric oxide (NO).</text>
</comment>
<comment type="similarity">
    <text evidence="4">Belongs to the long-chain O-acyltransferase family.</text>
</comment>
<accession>P9WKB7</accession>
<accession>L0T2V6</accession>
<accession>P96403</accession>
<keyword id="KW-0012">Acyltransferase</keyword>
<keyword id="KW-0319">Glycerol metabolism</keyword>
<keyword id="KW-0444">Lipid biosynthesis</keyword>
<keyword id="KW-0443">Lipid metabolism</keyword>
<keyword id="KW-1185">Reference proteome</keyword>
<keyword id="KW-0808">Transferase</keyword>
<protein>
    <recommendedName>
        <fullName>Putative diacyglycerol O-acyltransferase Rv0221</fullName>
        <ecNumber evidence="3">2.3.1.20</ecNumber>
    </recommendedName>
    <alternativeName>
        <fullName>Putative triacylglycerol synthase Rv0221</fullName>
    </alternativeName>
</protein>
<evidence type="ECO:0000250" key="1">
    <source>
        <dbReference type="UniProtKB" id="P9WKC9"/>
    </source>
</evidence>
<evidence type="ECO:0000255" key="2"/>
<evidence type="ECO:0000269" key="3">
    <source>
    </source>
</evidence>
<evidence type="ECO:0000305" key="4"/>
<gene>
    <name type="ordered locus">Rv0221</name>
    <name type="ORF">MTCY08D5.16</name>
</gene>
<feature type="chain" id="PRO_0000222905" description="Putative diacyglycerol O-acyltransferase Rv0221">
    <location>
        <begin position="1"/>
        <end position="469"/>
    </location>
</feature>
<feature type="active site" description="Proton acceptor" evidence="2">
    <location>
        <position position="139"/>
    </location>
</feature>
<dbReference type="EC" id="2.3.1.20" evidence="3"/>
<dbReference type="EMBL" id="AL123456">
    <property type="protein sequence ID" value="CCP42949.1"/>
    <property type="molecule type" value="Genomic_DNA"/>
</dbReference>
<dbReference type="PIR" id="C70961">
    <property type="entry name" value="C70961"/>
</dbReference>
<dbReference type="RefSeq" id="NP_214735.1">
    <property type="nucleotide sequence ID" value="NC_000962.3"/>
</dbReference>
<dbReference type="RefSeq" id="WP_003900834.1">
    <property type="nucleotide sequence ID" value="NZ_NVQJ01000001.1"/>
</dbReference>
<dbReference type="SMR" id="P9WKB7"/>
<dbReference type="STRING" id="83332.Rv0221"/>
<dbReference type="SwissLipids" id="SLP:000001175"/>
<dbReference type="PaxDb" id="83332-Rv0221"/>
<dbReference type="DNASU" id="886719"/>
<dbReference type="GeneID" id="886719"/>
<dbReference type="KEGG" id="mtu:Rv0221"/>
<dbReference type="KEGG" id="mtv:RVBD_0221"/>
<dbReference type="TubercuList" id="Rv0221"/>
<dbReference type="eggNOG" id="COG1020">
    <property type="taxonomic scope" value="Bacteria"/>
</dbReference>
<dbReference type="InParanoid" id="P9WKB7"/>
<dbReference type="OrthoDB" id="9810950at2"/>
<dbReference type="PhylomeDB" id="P9WKB7"/>
<dbReference type="UniPathway" id="UPA00282"/>
<dbReference type="Proteomes" id="UP000001584">
    <property type="component" value="Chromosome"/>
</dbReference>
<dbReference type="GO" id="GO:0005886">
    <property type="term" value="C:plasma membrane"/>
    <property type="evidence" value="ECO:0007005"/>
    <property type="project" value="MTBBASE"/>
</dbReference>
<dbReference type="GO" id="GO:0004144">
    <property type="term" value="F:diacylglycerol O-acyltransferase activity"/>
    <property type="evidence" value="ECO:0007669"/>
    <property type="project" value="UniProtKB-EC"/>
</dbReference>
<dbReference type="GO" id="GO:0008374">
    <property type="term" value="F:O-acyltransferase activity"/>
    <property type="evidence" value="ECO:0000318"/>
    <property type="project" value="GO_Central"/>
</dbReference>
<dbReference type="GO" id="GO:0051701">
    <property type="term" value="P:biological process involved in interaction with host"/>
    <property type="evidence" value="ECO:0000318"/>
    <property type="project" value="GO_Central"/>
</dbReference>
<dbReference type="GO" id="GO:0006071">
    <property type="term" value="P:glycerol metabolic process"/>
    <property type="evidence" value="ECO:0007669"/>
    <property type="project" value="UniProtKB-KW"/>
</dbReference>
<dbReference type="GO" id="GO:0001666">
    <property type="term" value="P:response to hypoxia"/>
    <property type="evidence" value="ECO:0000318"/>
    <property type="project" value="GO_Central"/>
</dbReference>
<dbReference type="GO" id="GO:0071731">
    <property type="term" value="P:response to nitric oxide"/>
    <property type="evidence" value="ECO:0000318"/>
    <property type="project" value="GO_Central"/>
</dbReference>
<dbReference type="GO" id="GO:0019432">
    <property type="term" value="P:triglyceride biosynthetic process"/>
    <property type="evidence" value="ECO:0000318"/>
    <property type="project" value="GO_Central"/>
</dbReference>
<dbReference type="InterPro" id="IPR014292">
    <property type="entry name" value="Acyl_transf_WS/DGAT"/>
</dbReference>
<dbReference type="InterPro" id="IPR045034">
    <property type="entry name" value="O-acyltransferase_WSD1-like"/>
</dbReference>
<dbReference type="InterPro" id="IPR009721">
    <property type="entry name" value="O-acyltransferase_WSD1_C"/>
</dbReference>
<dbReference type="InterPro" id="IPR004255">
    <property type="entry name" value="O-acyltransferase_WSD1_N"/>
</dbReference>
<dbReference type="NCBIfam" id="TIGR02946">
    <property type="entry name" value="acyl_WS_DGAT"/>
    <property type="match status" value="1"/>
</dbReference>
<dbReference type="PANTHER" id="PTHR31650">
    <property type="entry name" value="O-ACYLTRANSFERASE (WSD1-LIKE) FAMILY PROTEIN"/>
    <property type="match status" value="1"/>
</dbReference>
<dbReference type="PANTHER" id="PTHR31650:SF1">
    <property type="entry name" value="WAX ESTER SYNTHASE_DIACYLGLYCEROL ACYLTRANSFERASE 4-RELATED"/>
    <property type="match status" value="1"/>
</dbReference>
<dbReference type="Pfam" id="PF06974">
    <property type="entry name" value="WS_DGAT_C"/>
    <property type="match status" value="1"/>
</dbReference>
<dbReference type="Pfam" id="PF03007">
    <property type="entry name" value="WS_DGAT_cat"/>
    <property type="match status" value="1"/>
</dbReference>
<dbReference type="SUPFAM" id="SSF52777">
    <property type="entry name" value="CoA-dependent acyltransferases"/>
    <property type="match status" value="1"/>
</dbReference>
<reference key="1">
    <citation type="journal article" date="1998" name="Nature">
        <title>Deciphering the biology of Mycobacterium tuberculosis from the complete genome sequence.</title>
        <authorList>
            <person name="Cole S.T."/>
            <person name="Brosch R."/>
            <person name="Parkhill J."/>
            <person name="Garnier T."/>
            <person name="Churcher C.M."/>
            <person name="Harris D.E."/>
            <person name="Gordon S.V."/>
            <person name="Eiglmeier K."/>
            <person name="Gas S."/>
            <person name="Barry C.E. III"/>
            <person name="Tekaia F."/>
            <person name="Badcock K."/>
            <person name="Basham D."/>
            <person name="Brown D."/>
            <person name="Chillingworth T."/>
            <person name="Connor R."/>
            <person name="Davies R.M."/>
            <person name="Devlin K."/>
            <person name="Feltwell T."/>
            <person name="Gentles S."/>
            <person name="Hamlin N."/>
            <person name="Holroyd S."/>
            <person name="Hornsby T."/>
            <person name="Jagels K."/>
            <person name="Krogh A."/>
            <person name="McLean J."/>
            <person name="Moule S."/>
            <person name="Murphy L.D."/>
            <person name="Oliver S."/>
            <person name="Osborne J."/>
            <person name="Quail M.A."/>
            <person name="Rajandream M.A."/>
            <person name="Rogers J."/>
            <person name="Rutter S."/>
            <person name="Seeger K."/>
            <person name="Skelton S."/>
            <person name="Squares S."/>
            <person name="Squares R."/>
            <person name="Sulston J.E."/>
            <person name="Taylor K."/>
            <person name="Whitehead S."/>
            <person name="Barrell B.G."/>
        </authorList>
    </citation>
    <scope>NUCLEOTIDE SEQUENCE [LARGE SCALE GENOMIC DNA]</scope>
    <source>
        <strain>ATCC 25618 / H37Rv</strain>
    </source>
</reference>
<reference key="2">
    <citation type="journal article" date="2004" name="J. Bacteriol.">
        <title>Induction of a novel class of diacylglycerol acyltransferases and triacylglycerol accumulation in Mycobacterium tuberculosis as it goes into a dormancy-like state in culture.</title>
        <authorList>
            <person name="Daniel J."/>
            <person name="Deb C."/>
            <person name="Dubey V.S."/>
            <person name="Sirakova T.D."/>
            <person name="Abomoelak B."/>
            <person name="Morbidoni H.R."/>
            <person name="Kolattukudy P.E."/>
        </authorList>
    </citation>
    <scope>EXPRESSION IN E.COLI</scope>
    <scope>CATALYTIC ACTIVITY</scope>
    <scope>INDUCTION BY NITRIC OXIDE (NO)</scope>
    <source>
        <strain>ATCC 25618 / H37Rv</strain>
    </source>
</reference>
<reference key="3">
    <citation type="journal article" date="2011" name="Mol. Cell. Proteomics">
        <title>Proteogenomic analysis of Mycobacterium tuberculosis by high resolution mass spectrometry.</title>
        <authorList>
            <person name="Kelkar D.S."/>
            <person name="Kumar D."/>
            <person name="Kumar P."/>
            <person name="Balakrishnan L."/>
            <person name="Muthusamy B."/>
            <person name="Yadav A.K."/>
            <person name="Shrivastava P."/>
            <person name="Marimuthu A."/>
            <person name="Anand S."/>
            <person name="Sundaram H."/>
            <person name="Kingsbury R."/>
            <person name="Harsha H.C."/>
            <person name="Nair B."/>
            <person name="Prasad T.S."/>
            <person name="Chauhan D.S."/>
            <person name="Katoch K."/>
            <person name="Katoch V.M."/>
            <person name="Kumar P."/>
            <person name="Chaerkady R."/>
            <person name="Ramachandran S."/>
            <person name="Dash D."/>
            <person name="Pandey A."/>
        </authorList>
    </citation>
    <scope>IDENTIFICATION BY MASS SPECTROMETRY [LARGE SCALE ANALYSIS]</scope>
    <source>
        <strain>ATCC 25618 / H37Rv</strain>
    </source>
</reference>
<name>Y221_MYCTU</name>
<proteinExistence type="evidence at protein level"/>